<organism>
    <name type="scientific">Patiria pectinifera</name>
    <name type="common">Starfish</name>
    <name type="synonym">Asterina pectinifera</name>
    <dbReference type="NCBI Taxonomy" id="7594"/>
    <lineage>
        <taxon>Eukaryota</taxon>
        <taxon>Metazoa</taxon>
        <taxon>Echinodermata</taxon>
        <taxon>Eleutherozoa</taxon>
        <taxon>Asterozoa</taxon>
        <taxon>Asteroidea</taxon>
        <taxon>Valvatacea</taxon>
        <taxon>Valvatida</taxon>
        <taxon>Asterinidae</taxon>
        <taxon>Patiria</taxon>
    </lineage>
</organism>
<name>NU2M_PATPE</name>
<accession>Q33819</accession>
<evidence type="ECO:0000250" key="1"/>
<evidence type="ECO:0000255" key="2"/>
<evidence type="ECO:0000305" key="3"/>
<proteinExistence type="inferred from homology"/>
<sequence length="354" mass="38654">MHRNILMVLIANVVLGTLIVLSSHHWFTLWVGLEMNTLSILPILSYQFTPRNVESSVKYFLVQSVSAGIVLNVVIIQAWLYSSWSLMEPLNQATSFLMTLALGLKLGLFPCHYWFPDVIQGVGFIQGLVLSTWQKIAPFAVLVYVVESLNISLLASLGVLSVLVGGWGGLNQTQMRKIFAFSSIAHIGWICSTVGYSVSVACVMLVAYIIINSSVFFMANSFDLKSLSHVGRLSLYNFVGGAGLVLSILSLGGLPPLFGFLIKFISLKCLVENGCFILAGVLVMGSLLSLFFYLRIAFNSSLTLFPQHSLVVFSWRSNRNQTGGFTSEGVLLSVSFGISSLGLVCLPVFISLLN</sequence>
<keyword id="KW-0249">Electron transport</keyword>
<keyword id="KW-0472">Membrane</keyword>
<keyword id="KW-0496">Mitochondrion</keyword>
<keyword id="KW-0999">Mitochondrion inner membrane</keyword>
<keyword id="KW-0520">NAD</keyword>
<keyword id="KW-0679">Respiratory chain</keyword>
<keyword id="KW-1278">Translocase</keyword>
<keyword id="KW-0812">Transmembrane</keyword>
<keyword id="KW-1133">Transmembrane helix</keyword>
<keyword id="KW-0813">Transport</keyword>
<keyword id="KW-0830">Ubiquinone</keyword>
<comment type="function">
    <text evidence="1">Core subunit of the mitochondrial membrane respiratory chain NADH dehydrogenase (Complex I) that is believed to belong to the minimal assembly required for catalysis. Complex I functions in the transfer of electrons from NADH to the respiratory chain. The immediate electron acceptor for the enzyme is believed to be ubiquinone (By similarity).</text>
</comment>
<comment type="catalytic activity">
    <reaction>
        <text>a ubiquinone + NADH + 5 H(+)(in) = a ubiquinol + NAD(+) + 4 H(+)(out)</text>
        <dbReference type="Rhea" id="RHEA:29091"/>
        <dbReference type="Rhea" id="RHEA-COMP:9565"/>
        <dbReference type="Rhea" id="RHEA-COMP:9566"/>
        <dbReference type="ChEBI" id="CHEBI:15378"/>
        <dbReference type="ChEBI" id="CHEBI:16389"/>
        <dbReference type="ChEBI" id="CHEBI:17976"/>
        <dbReference type="ChEBI" id="CHEBI:57540"/>
        <dbReference type="ChEBI" id="CHEBI:57945"/>
        <dbReference type="EC" id="7.1.1.2"/>
    </reaction>
</comment>
<comment type="subcellular location">
    <subcellularLocation>
        <location>Mitochondrion inner membrane</location>
        <topology>Multi-pass membrane protein</topology>
    </subcellularLocation>
</comment>
<comment type="similarity">
    <text evidence="3">Belongs to the complex I subunit 2 family.</text>
</comment>
<reference key="1">
    <citation type="journal article" date="1995" name="Genetics">
        <title>Nucleotide sequence and gene organization of the starfish Asterina pectinifera mitochondrial genome.</title>
        <authorList>
            <person name="Asakawa S."/>
            <person name="Himeno H."/>
            <person name="Miura K."/>
            <person name="Watanabe K."/>
        </authorList>
    </citation>
    <scope>NUCLEOTIDE SEQUENCE [GENOMIC DNA]</scope>
    <source>
        <tissue>Ovary</tissue>
    </source>
</reference>
<gene>
    <name type="primary">ND2</name>
</gene>
<dbReference type="EC" id="7.1.1.2"/>
<dbReference type="EMBL" id="D16387">
    <property type="protein sequence ID" value="BAA03878.1"/>
    <property type="molecule type" value="Genomic_DNA"/>
</dbReference>
<dbReference type="PIR" id="S70595">
    <property type="entry name" value="S70595"/>
</dbReference>
<dbReference type="RefSeq" id="NP_008166.1">
    <property type="nucleotide sequence ID" value="NC_001627.1"/>
</dbReference>
<dbReference type="SMR" id="Q33819"/>
<dbReference type="GeneID" id="807822"/>
<dbReference type="CTD" id="4536"/>
<dbReference type="GO" id="GO:0005743">
    <property type="term" value="C:mitochondrial inner membrane"/>
    <property type="evidence" value="ECO:0007669"/>
    <property type="project" value="UniProtKB-SubCell"/>
</dbReference>
<dbReference type="GO" id="GO:0008137">
    <property type="term" value="F:NADH dehydrogenase (ubiquinone) activity"/>
    <property type="evidence" value="ECO:0007669"/>
    <property type="project" value="UniProtKB-EC"/>
</dbReference>
<dbReference type="GO" id="GO:0006120">
    <property type="term" value="P:mitochondrial electron transport, NADH to ubiquinone"/>
    <property type="evidence" value="ECO:0007669"/>
    <property type="project" value="InterPro"/>
</dbReference>
<dbReference type="InterPro" id="IPR050175">
    <property type="entry name" value="Complex_I_Subunit_2"/>
</dbReference>
<dbReference type="InterPro" id="IPR010933">
    <property type="entry name" value="NADH_DH_su2_C"/>
</dbReference>
<dbReference type="InterPro" id="IPR003917">
    <property type="entry name" value="NADH_UbQ_OxRdtase_chain2"/>
</dbReference>
<dbReference type="InterPro" id="IPR001750">
    <property type="entry name" value="ND/Mrp_TM"/>
</dbReference>
<dbReference type="PANTHER" id="PTHR46552">
    <property type="entry name" value="NADH-UBIQUINONE OXIDOREDUCTASE CHAIN 2"/>
    <property type="match status" value="1"/>
</dbReference>
<dbReference type="PANTHER" id="PTHR46552:SF1">
    <property type="entry name" value="NADH-UBIQUINONE OXIDOREDUCTASE CHAIN 2"/>
    <property type="match status" value="1"/>
</dbReference>
<dbReference type="Pfam" id="PF06444">
    <property type="entry name" value="NADH_dehy_S2_C"/>
    <property type="match status" value="1"/>
</dbReference>
<dbReference type="Pfam" id="PF00361">
    <property type="entry name" value="Proton_antipo_M"/>
    <property type="match status" value="1"/>
</dbReference>
<dbReference type="PRINTS" id="PR01436">
    <property type="entry name" value="NADHDHGNASE2"/>
</dbReference>
<feature type="chain" id="PRO_0000117555" description="NADH-ubiquinone oxidoreductase chain 2">
    <location>
        <begin position="1"/>
        <end position="354"/>
    </location>
</feature>
<feature type="transmembrane region" description="Helical" evidence="2">
    <location>
        <begin position="5"/>
        <end position="25"/>
    </location>
</feature>
<feature type="transmembrane region" description="Helical" evidence="2">
    <location>
        <begin position="26"/>
        <end position="46"/>
    </location>
</feature>
<feature type="transmembrane region" description="Helical" evidence="2">
    <location>
        <begin position="60"/>
        <end position="80"/>
    </location>
</feature>
<feature type="transmembrane region" description="Helical" evidence="2">
    <location>
        <begin position="96"/>
        <end position="116"/>
    </location>
</feature>
<feature type="transmembrane region" description="Helical" evidence="2">
    <location>
        <begin position="122"/>
        <end position="142"/>
    </location>
</feature>
<feature type="transmembrane region" description="Helical" evidence="2">
    <location>
        <begin position="149"/>
        <end position="169"/>
    </location>
</feature>
<feature type="transmembrane region" description="Helical" evidence="2">
    <location>
        <begin position="198"/>
        <end position="218"/>
    </location>
</feature>
<feature type="transmembrane region" description="Helical" evidence="2">
    <location>
        <begin position="242"/>
        <end position="262"/>
    </location>
</feature>
<feature type="transmembrane region" description="Helical" evidence="2">
    <location>
        <begin position="274"/>
        <end position="294"/>
    </location>
</feature>
<feature type="transmembrane region" description="Helical" evidence="2">
    <location>
        <begin position="330"/>
        <end position="350"/>
    </location>
</feature>
<protein>
    <recommendedName>
        <fullName>NADH-ubiquinone oxidoreductase chain 2</fullName>
        <ecNumber>7.1.1.2</ecNumber>
    </recommendedName>
    <alternativeName>
        <fullName>NADH dehydrogenase subunit 2</fullName>
    </alternativeName>
</protein>
<geneLocation type="mitochondrion"/>